<evidence type="ECO:0000250" key="1"/>
<evidence type="ECO:0000255" key="2">
    <source>
        <dbReference type="PROSITE-ProRule" id="PRU00286"/>
    </source>
</evidence>
<evidence type="ECO:0000256" key="3">
    <source>
        <dbReference type="SAM" id="MobiDB-lite"/>
    </source>
</evidence>
<evidence type="ECO:0000269" key="4">
    <source>
    </source>
</evidence>
<evidence type="ECO:0000305" key="5"/>
<protein>
    <recommendedName>
        <fullName>Pre-mRNA-splicing factor cwf23</fullName>
    </recommendedName>
    <alternativeName>
        <fullName>Complexed with cdc5 protein 23</fullName>
    </alternativeName>
</protein>
<organism>
    <name type="scientific">Schizosaccharomyces pombe (strain 972 / ATCC 24843)</name>
    <name type="common">Fission yeast</name>
    <dbReference type="NCBI Taxonomy" id="284812"/>
    <lineage>
        <taxon>Eukaryota</taxon>
        <taxon>Fungi</taxon>
        <taxon>Dikarya</taxon>
        <taxon>Ascomycota</taxon>
        <taxon>Taphrinomycotina</taxon>
        <taxon>Schizosaccharomycetes</taxon>
        <taxon>Schizosaccharomycetales</taxon>
        <taxon>Schizosaccharomycetaceae</taxon>
        <taxon>Schizosaccharomyces</taxon>
    </lineage>
</organism>
<feature type="chain" id="PRO_0000071128" description="Pre-mRNA-splicing factor cwf23">
    <location>
        <begin position="1"/>
        <end position="289"/>
    </location>
</feature>
<feature type="domain" description="J" evidence="2">
    <location>
        <begin position="9"/>
        <end position="74"/>
    </location>
</feature>
<feature type="region of interest" description="Disordered" evidence="3">
    <location>
        <begin position="129"/>
        <end position="161"/>
    </location>
</feature>
<feature type="region of interest" description="Disordered" evidence="3">
    <location>
        <begin position="269"/>
        <end position="289"/>
    </location>
</feature>
<feature type="compositionally biased region" description="Basic and acidic residues" evidence="3">
    <location>
        <begin position="129"/>
        <end position="148"/>
    </location>
</feature>
<keyword id="KW-0143">Chaperone</keyword>
<keyword id="KW-0963">Cytoplasm</keyword>
<keyword id="KW-0507">mRNA processing</keyword>
<keyword id="KW-0508">mRNA splicing</keyword>
<keyword id="KW-0539">Nucleus</keyword>
<keyword id="KW-1185">Reference proteome</keyword>
<keyword id="KW-0747">Spliceosome</keyword>
<sequence length="289" mass="34575">MASEGDSIDYYELLGINEDAQDQEIHRAWRKTSLKYHPDKNPNDPKAAEKFHMLQLAYNALIDVQLRKAYDSERFAKLARKRREEAFNFQRKSMVDDLRERERQFYDSLEKKENERDRLQEKLRALQEESANLRRQRENRLREEQEQSKRRKQETPSSKISELDRSIRIRWKRKYADQVNDAYLRSIYSSFGTLQNVVIQKDISKEKKYVYSIIVFETLSSAYSAINAEKPSKIYDVQWLKPPKSNSNTPTEKDTTVEDYEEITIMRMKQKHKQKQKENERKATSTMNA</sequence>
<proteinExistence type="evidence at protein level"/>
<name>CWC23_SCHPO</name>
<accession>Q9P7C6</accession>
<accession>Q9USH3</accession>
<dbReference type="EMBL" id="CU329672">
    <property type="protein sequence ID" value="CAB85447.2"/>
    <property type="molecule type" value="Genomic_DNA"/>
</dbReference>
<dbReference type="PIR" id="T41691">
    <property type="entry name" value="T41691"/>
</dbReference>
<dbReference type="RefSeq" id="NP_587857.2">
    <property type="nucleotide sequence ID" value="NM_001022850.2"/>
</dbReference>
<dbReference type="SMR" id="Q9P7C6"/>
<dbReference type="BioGRID" id="275838">
    <property type="interactions" value="7"/>
</dbReference>
<dbReference type="FunCoup" id="Q9P7C6">
    <property type="interactions" value="428"/>
</dbReference>
<dbReference type="IntAct" id="Q9P7C6">
    <property type="interactions" value="1"/>
</dbReference>
<dbReference type="STRING" id="284812.Q9P7C6"/>
<dbReference type="PaxDb" id="4896-SPCC10H11.02.1"/>
<dbReference type="EnsemblFungi" id="SPCC10H11.02.1">
    <property type="protein sequence ID" value="SPCC10H11.02.1:pep"/>
    <property type="gene ID" value="SPCC10H11.02"/>
</dbReference>
<dbReference type="GeneID" id="2539268"/>
<dbReference type="KEGG" id="spo:2539268"/>
<dbReference type="PomBase" id="SPCC10H11.02">
    <property type="gene designation" value="cwf23"/>
</dbReference>
<dbReference type="VEuPathDB" id="FungiDB:SPCC10H11.02"/>
<dbReference type="eggNOG" id="KOG0691">
    <property type="taxonomic scope" value="Eukaryota"/>
</dbReference>
<dbReference type="HOGENOM" id="CLU_045732_3_1_1"/>
<dbReference type="InParanoid" id="Q9P7C6"/>
<dbReference type="OMA" id="NPLHFQW"/>
<dbReference type="PhylomeDB" id="Q9P7C6"/>
<dbReference type="PRO" id="PR:Q9P7C6"/>
<dbReference type="Proteomes" id="UP000002485">
    <property type="component" value="Chromosome III"/>
</dbReference>
<dbReference type="GO" id="GO:0005737">
    <property type="term" value="C:cytoplasm"/>
    <property type="evidence" value="ECO:0007669"/>
    <property type="project" value="UniProtKB-SubCell"/>
</dbReference>
<dbReference type="GO" id="GO:0005730">
    <property type="term" value="C:nucleolus"/>
    <property type="evidence" value="ECO:0007005"/>
    <property type="project" value="PomBase"/>
</dbReference>
<dbReference type="GO" id="GO:0005634">
    <property type="term" value="C:nucleus"/>
    <property type="evidence" value="ECO:0007005"/>
    <property type="project" value="PomBase"/>
</dbReference>
<dbReference type="GO" id="GO:0005681">
    <property type="term" value="C:spliceosomal complex"/>
    <property type="evidence" value="ECO:0000314"/>
    <property type="project" value="PomBase"/>
</dbReference>
<dbReference type="GO" id="GO:0005684">
    <property type="term" value="C:U2-type spliceosomal complex"/>
    <property type="evidence" value="ECO:0000266"/>
    <property type="project" value="PomBase"/>
</dbReference>
<dbReference type="GO" id="GO:0003676">
    <property type="term" value="F:nucleic acid binding"/>
    <property type="evidence" value="ECO:0007669"/>
    <property type="project" value="InterPro"/>
</dbReference>
<dbReference type="GO" id="GO:0000390">
    <property type="term" value="P:spliceosomal complex disassembly"/>
    <property type="evidence" value="ECO:0000316"/>
    <property type="project" value="PomBase"/>
</dbReference>
<dbReference type="CDD" id="cd06257">
    <property type="entry name" value="DnaJ"/>
    <property type="match status" value="1"/>
</dbReference>
<dbReference type="FunFam" id="1.10.287.110:FF:000059">
    <property type="entry name" value="dnaJ homolog subfamily C member 17"/>
    <property type="match status" value="1"/>
</dbReference>
<dbReference type="Gene3D" id="3.30.70.330">
    <property type="match status" value="1"/>
</dbReference>
<dbReference type="Gene3D" id="1.10.287.110">
    <property type="entry name" value="DnaJ domain"/>
    <property type="match status" value="1"/>
</dbReference>
<dbReference type="InterPro" id="IPR001623">
    <property type="entry name" value="DnaJ_domain"/>
</dbReference>
<dbReference type="InterPro" id="IPR018253">
    <property type="entry name" value="DnaJ_domain_CS"/>
</dbReference>
<dbReference type="InterPro" id="IPR036869">
    <property type="entry name" value="J_dom_sf"/>
</dbReference>
<dbReference type="InterPro" id="IPR012677">
    <property type="entry name" value="Nucleotide-bd_a/b_plait_sf"/>
</dbReference>
<dbReference type="InterPro" id="IPR052094">
    <property type="entry name" value="Pre-mRNA-splicing_ERAD"/>
</dbReference>
<dbReference type="InterPro" id="IPR035979">
    <property type="entry name" value="RBD_domain_sf"/>
</dbReference>
<dbReference type="PANTHER" id="PTHR44313">
    <property type="entry name" value="DNAJ HOMOLOG SUBFAMILY C MEMBER 17"/>
    <property type="match status" value="1"/>
</dbReference>
<dbReference type="PANTHER" id="PTHR44313:SF1">
    <property type="entry name" value="DNAJ HOMOLOG SUBFAMILY C MEMBER 17"/>
    <property type="match status" value="1"/>
</dbReference>
<dbReference type="Pfam" id="PF00226">
    <property type="entry name" value="DnaJ"/>
    <property type="match status" value="1"/>
</dbReference>
<dbReference type="PRINTS" id="PR00625">
    <property type="entry name" value="JDOMAIN"/>
</dbReference>
<dbReference type="SMART" id="SM00271">
    <property type="entry name" value="DnaJ"/>
    <property type="match status" value="1"/>
</dbReference>
<dbReference type="SUPFAM" id="SSF46565">
    <property type="entry name" value="Chaperone J-domain"/>
    <property type="match status" value="1"/>
</dbReference>
<dbReference type="SUPFAM" id="SSF54928">
    <property type="entry name" value="RNA-binding domain, RBD"/>
    <property type="match status" value="1"/>
</dbReference>
<dbReference type="PROSITE" id="PS00636">
    <property type="entry name" value="DNAJ_1"/>
    <property type="match status" value="1"/>
</dbReference>
<dbReference type="PROSITE" id="PS50076">
    <property type="entry name" value="DNAJ_2"/>
    <property type="match status" value="1"/>
</dbReference>
<reference key="1">
    <citation type="journal article" date="2002" name="Nature">
        <title>The genome sequence of Schizosaccharomyces pombe.</title>
        <authorList>
            <person name="Wood V."/>
            <person name="Gwilliam R."/>
            <person name="Rajandream M.A."/>
            <person name="Lyne M.H."/>
            <person name="Lyne R."/>
            <person name="Stewart A."/>
            <person name="Sgouros J.G."/>
            <person name="Peat N."/>
            <person name="Hayles J."/>
            <person name="Baker S.G."/>
            <person name="Basham D."/>
            <person name="Bowman S."/>
            <person name="Brooks K."/>
            <person name="Brown D."/>
            <person name="Brown S."/>
            <person name="Chillingworth T."/>
            <person name="Churcher C.M."/>
            <person name="Collins M."/>
            <person name="Connor R."/>
            <person name="Cronin A."/>
            <person name="Davis P."/>
            <person name="Feltwell T."/>
            <person name="Fraser A."/>
            <person name="Gentles S."/>
            <person name="Goble A."/>
            <person name="Hamlin N."/>
            <person name="Harris D.E."/>
            <person name="Hidalgo J."/>
            <person name="Hodgson G."/>
            <person name="Holroyd S."/>
            <person name="Hornsby T."/>
            <person name="Howarth S."/>
            <person name="Huckle E.J."/>
            <person name="Hunt S."/>
            <person name="Jagels K."/>
            <person name="James K.D."/>
            <person name="Jones L."/>
            <person name="Jones M."/>
            <person name="Leather S."/>
            <person name="McDonald S."/>
            <person name="McLean J."/>
            <person name="Mooney P."/>
            <person name="Moule S."/>
            <person name="Mungall K.L."/>
            <person name="Murphy L.D."/>
            <person name="Niblett D."/>
            <person name="Odell C."/>
            <person name="Oliver K."/>
            <person name="O'Neil S."/>
            <person name="Pearson D."/>
            <person name="Quail M.A."/>
            <person name="Rabbinowitsch E."/>
            <person name="Rutherford K.M."/>
            <person name="Rutter S."/>
            <person name="Saunders D."/>
            <person name="Seeger K."/>
            <person name="Sharp S."/>
            <person name="Skelton J."/>
            <person name="Simmonds M.N."/>
            <person name="Squares R."/>
            <person name="Squares S."/>
            <person name="Stevens K."/>
            <person name="Taylor K."/>
            <person name="Taylor R.G."/>
            <person name="Tivey A."/>
            <person name="Walsh S.V."/>
            <person name="Warren T."/>
            <person name="Whitehead S."/>
            <person name="Woodward J.R."/>
            <person name="Volckaert G."/>
            <person name="Aert R."/>
            <person name="Robben J."/>
            <person name="Grymonprez B."/>
            <person name="Weltjens I."/>
            <person name="Vanstreels E."/>
            <person name="Rieger M."/>
            <person name="Schaefer M."/>
            <person name="Mueller-Auer S."/>
            <person name="Gabel C."/>
            <person name="Fuchs M."/>
            <person name="Duesterhoeft A."/>
            <person name="Fritzc C."/>
            <person name="Holzer E."/>
            <person name="Moestl D."/>
            <person name="Hilbert H."/>
            <person name="Borzym K."/>
            <person name="Langer I."/>
            <person name="Beck A."/>
            <person name="Lehrach H."/>
            <person name="Reinhardt R."/>
            <person name="Pohl T.M."/>
            <person name="Eger P."/>
            <person name="Zimmermann W."/>
            <person name="Wedler H."/>
            <person name="Wambutt R."/>
            <person name="Purnelle B."/>
            <person name="Goffeau A."/>
            <person name="Cadieu E."/>
            <person name="Dreano S."/>
            <person name="Gloux S."/>
            <person name="Lelaure V."/>
            <person name="Mottier S."/>
            <person name="Galibert F."/>
            <person name="Aves S.J."/>
            <person name="Xiang Z."/>
            <person name="Hunt C."/>
            <person name="Moore K."/>
            <person name="Hurst S.M."/>
            <person name="Lucas M."/>
            <person name="Rochet M."/>
            <person name="Gaillardin C."/>
            <person name="Tallada V.A."/>
            <person name="Garzon A."/>
            <person name="Thode G."/>
            <person name="Daga R.R."/>
            <person name="Cruzado L."/>
            <person name="Jimenez J."/>
            <person name="Sanchez M."/>
            <person name="del Rey F."/>
            <person name="Benito J."/>
            <person name="Dominguez A."/>
            <person name="Revuelta J.L."/>
            <person name="Moreno S."/>
            <person name="Armstrong J."/>
            <person name="Forsburg S.L."/>
            <person name="Cerutti L."/>
            <person name="Lowe T."/>
            <person name="McCombie W.R."/>
            <person name="Paulsen I."/>
            <person name="Potashkin J."/>
            <person name="Shpakovski G.V."/>
            <person name="Ussery D."/>
            <person name="Barrell B.G."/>
            <person name="Nurse P."/>
        </authorList>
    </citation>
    <scope>NUCLEOTIDE SEQUENCE [LARGE SCALE GENOMIC DNA]</scope>
    <source>
        <strain>972 / ATCC 24843</strain>
    </source>
</reference>
<reference key="2">
    <citation type="journal article" date="2002" name="Mol. Cell. Biol.">
        <title>Proteomics analysis reveals stable multiprotein complexes in both fission and budding yeasts containing Myb-related Cdc5p/Cef1p, novel pre-mRNA splicing factors, and snRNAs.</title>
        <authorList>
            <person name="Ohi M.D."/>
            <person name="Link A.J."/>
            <person name="Ren L."/>
            <person name="Jennings J.L."/>
            <person name="McDonald W.H."/>
            <person name="Gould K.L."/>
        </authorList>
    </citation>
    <scope>IDENTIFICATION IN THE CWF COMPLEX</scope>
    <scope>IDENTIFICATION BY MASS SPECTROMETRY</scope>
</reference>
<gene>
    <name type="primary">cwf23</name>
    <name type="ORF">SPCC10H11.02</name>
    <name type="ORF">SPCP31B10.01</name>
</gene>
<comment type="function">
    <text evidence="1">Involved in pre-mRNA splicing. May be involved in endoplasmic reticulum-associated protein degradation (ERAD) and required for growth at low and high temperatures (By similarity).</text>
</comment>
<comment type="subunit">
    <text evidence="4">Belongs to the 40S cdc5-associated complex (or cwf complex), a spliceosome sub-complex reminiscent of a late-stage spliceosome composed of the U2, U5 and U6 snRNAs and at least brr2, cdc5, cwf2/prp3, cwf3/syf1, cwf4/syf3, cwf5/ecm2, spp42/cwf6, cwf7/spf27, cwf8, cwf9, cwf10, cwf11, cwf12, prp45/cwf13, cwf14, cwf15, cwf16, cwf17, cwf18, cwf19, cwf20, cwf21, cwf22, cwf23, cwf24, cwf25, cwf26, cyp7/cwf27, cwf28, cwf29/ist3, lea1, msl1, prp5/cwf1, prp10, prp12/sap130, prp17, prp22, sap61, sap62, sap114, sap145, slu7, smb1, smd1, smd3, smf1, smg1 and syf2.</text>
</comment>
<comment type="subcellular location">
    <subcellularLocation>
        <location evidence="1">Cytoplasm</location>
    </subcellularLocation>
    <subcellularLocation>
        <location evidence="1">Nucleus</location>
    </subcellularLocation>
</comment>
<comment type="similarity">
    <text evidence="5">Belongs to the DnaJ family.</text>
</comment>